<sequence length="10" mass="1275">QDVDHVFLRF</sequence>
<feature type="peptide" id="PRO_0000421710" description="Myosuppressin" evidence="3">
    <location>
        <begin position="1"/>
        <end position="10"/>
    </location>
</feature>
<feature type="modified residue" description="Pyrrolidone carboxylic acid" evidence="3">
    <location>
        <position position="1"/>
    </location>
</feature>
<feature type="modified residue" description="Phenylalanine amide" evidence="3">
    <location>
        <position position="10"/>
    </location>
</feature>
<protein>
    <recommendedName>
        <fullName evidence="4">Myosuppressin</fullName>
        <shortName evidence="4">MS</shortName>
    </recommendedName>
</protein>
<comment type="function">
    <text evidence="1">Myoinhibiting neuropeptide.</text>
</comment>
<comment type="subcellular location">
    <subcellularLocation>
        <location evidence="6">Secreted</location>
    </subcellularLocation>
</comment>
<comment type="similarity">
    <text evidence="2">Belongs to the myosuppressin family.</text>
</comment>
<dbReference type="GO" id="GO:0005576">
    <property type="term" value="C:extracellular region"/>
    <property type="evidence" value="ECO:0007669"/>
    <property type="project" value="UniProtKB-SubCell"/>
</dbReference>
<dbReference type="GO" id="GO:0007218">
    <property type="term" value="P:neuropeptide signaling pathway"/>
    <property type="evidence" value="ECO:0007669"/>
    <property type="project" value="UniProtKB-KW"/>
</dbReference>
<evidence type="ECO:0000250" key="1">
    <source>
        <dbReference type="UniProtKB" id="P61849"/>
    </source>
</evidence>
<evidence type="ECO:0000255" key="2"/>
<evidence type="ECO:0000269" key="3">
    <source>
    </source>
</evidence>
<evidence type="ECO:0000303" key="4">
    <source>
    </source>
</evidence>
<evidence type="ECO:0000305" key="5"/>
<evidence type="ECO:0000305" key="6">
    <source>
    </source>
</evidence>
<keyword id="KW-0027">Amidation</keyword>
<keyword id="KW-0903">Direct protein sequencing</keyword>
<keyword id="KW-0527">Neuropeptide</keyword>
<keyword id="KW-0873">Pyrrolidone carboxylic acid</keyword>
<keyword id="KW-0964">Secreted</keyword>
<reference evidence="5" key="1">
    <citation type="journal article" date="2012" name="Syst. Biol.">
        <title>Peptidomics-based phylogeny and biogeography of Mantophasmatodea (Hexapoda).</title>
        <authorList>
            <person name="Predel R."/>
            <person name="Neupert S."/>
            <person name="Huetteroth W."/>
            <person name="Kahnt J."/>
            <person name="Waidelich D."/>
            <person name="Roth S."/>
        </authorList>
    </citation>
    <scope>PROTEIN SEQUENCE</scope>
    <scope>PYROGLUTAMATE FORMATION AT GLN-1</scope>
    <scope>AMIDATION AT PHE-10</scope>
    <source>
        <tissue evidence="3">Corpora cardiaca</tissue>
    </source>
</reference>
<name>NEMS_AUSGA</name>
<accession>B3A0F3</accession>
<organism>
    <name type="scientific">Austrophasma gansbaaiense</name>
    <name type="common">Gladiator</name>
    <name type="synonym">Heel-walker</name>
    <dbReference type="NCBI Taxonomy" id="253136"/>
    <lineage>
        <taxon>Eukaryota</taxon>
        <taxon>Metazoa</taxon>
        <taxon>Ecdysozoa</taxon>
        <taxon>Arthropoda</taxon>
        <taxon>Hexapoda</taxon>
        <taxon>Insecta</taxon>
        <taxon>Pterygota</taxon>
        <taxon>Neoptera</taxon>
        <taxon>Polyneoptera</taxon>
        <taxon>Mantophasmatodea</taxon>
        <taxon>Austrophasmatidae</taxon>
        <taxon>Austrophasma</taxon>
    </lineage>
</organism>
<proteinExistence type="evidence at protein level"/>